<evidence type="ECO:0000255" key="1">
    <source>
        <dbReference type="HAMAP-Rule" id="MF_01104"/>
    </source>
</evidence>
<dbReference type="EMBL" id="AM933173">
    <property type="protein sequence ID" value="CAR38683.1"/>
    <property type="molecule type" value="Genomic_DNA"/>
</dbReference>
<dbReference type="RefSeq" id="WP_000343990.1">
    <property type="nucleotide sequence ID" value="NC_011274.1"/>
</dbReference>
<dbReference type="SMR" id="B5RDU5"/>
<dbReference type="KEGG" id="seg:SG2877"/>
<dbReference type="HOGENOM" id="CLU_121866_0_0_6"/>
<dbReference type="Proteomes" id="UP000008321">
    <property type="component" value="Chromosome"/>
</dbReference>
<dbReference type="GO" id="GO:0009898">
    <property type="term" value="C:cytoplasmic side of plasma membrane"/>
    <property type="evidence" value="ECO:0007669"/>
    <property type="project" value="InterPro"/>
</dbReference>
<dbReference type="CDD" id="cd16323">
    <property type="entry name" value="Syd"/>
    <property type="match status" value="1"/>
</dbReference>
<dbReference type="Gene3D" id="3.40.1580.20">
    <property type="entry name" value="Syd protein"/>
    <property type="match status" value="1"/>
</dbReference>
<dbReference type="HAMAP" id="MF_01104">
    <property type="entry name" value="Syd"/>
    <property type="match status" value="1"/>
</dbReference>
<dbReference type="InterPro" id="IPR009948">
    <property type="entry name" value="Syd"/>
</dbReference>
<dbReference type="InterPro" id="IPR038228">
    <property type="entry name" value="Syd_sf"/>
</dbReference>
<dbReference type="NCBIfam" id="NF003439">
    <property type="entry name" value="PRK04968.1"/>
    <property type="match status" value="1"/>
</dbReference>
<dbReference type="Pfam" id="PF07348">
    <property type="entry name" value="Syd"/>
    <property type="match status" value="1"/>
</dbReference>
<sequence length="181" mass="20518">MDELTAQALKAFTTRYCDAWQEKHGSWPLSEELYGVPSPCIISSTRDAVYWQPQPFEGEENVNAVERAFDIMVQPALHAFYTTQFAGDMPAQFADEKLTLLQTWSQDDFRRVQENLIGHLVTQKRLKLPPTLFIATQENELEVISVCNLSGEVIKETLGTRNRTVLAATLAEFLTQLNPLL</sequence>
<accession>B5RDU5</accession>
<comment type="function">
    <text evidence="1">Interacts with the SecY protein in vivo. May bind preferentially to an uncomplexed state of SecY, thus functioning either as a chelating agent for excess SecY in the cell or as a regulatory factor that negatively controls the translocase function.</text>
</comment>
<comment type="subcellular location">
    <subcellularLocation>
        <location evidence="1">Cell inner membrane</location>
        <topology evidence="1">Peripheral membrane protein</topology>
        <orientation evidence="1">Cytoplasmic side</orientation>
    </subcellularLocation>
    <text evidence="1">Loosely associated with the cytoplasmic side of the inner membrane, probably via SecY.</text>
</comment>
<comment type="similarity">
    <text evidence="1">Belongs to the Syd family.</text>
</comment>
<proteinExistence type="inferred from homology"/>
<gene>
    <name evidence="1" type="primary">syd</name>
    <name type="ordered locus">SG2877</name>
</gene>
<feature type="chain" id="PRO_1000137037" description="Protein Syd">
    <location>
        <begin position="1"/>
        <end position="181"/>
    </location>
</feature>
<protein>
    <recommendedName>
        <fullName evidence="1">Protein Syd</fullName>
    </recommendedName>
</protein>
<organism>
    <name type="scientific">Salmonella gallinarum (strain 287/91 / NCTC 13346)</name>
    <dbReference type="NCBI Taxonomy" id="550538"/>
    <lineage>
        <taxon>Bacteria</taxon>
        <taxon>Pseudomonadati</taxon>
        <taxon>Pseudomonadota</taxon>
        <taxon>Gammaproteobacteria</taxon>
        <taxon>Enterobacterales</taxon>
        <taxon>Enterobacteriaceae</taxon>
        <taxon>Salmonella</taxon>
    </lineage>
</organism>
<reference key="1">
    <citation type="journal article" date="2008" name="Genome Res.">
        <title>Comparative genome analysis of Salmonella enteritidis PT4 and Salmonella gallinarum 287/91 provides insights into evolutionary and host adaptation pathways.</title>
        <authorList>
            <person name="Thomson N.R."/>
            <person name="Clayton D.J."/>
            <person name="Windhorst D."/>
            <person name="Vernikos G."/>
            <person name="Davidson S."/>
            <person name="Churcher C."/>
            <person name="Quail M.A."/>
            <person name="Stevens M."/>
            <person name="Jones M.A."/>
            <person name="Watson M."/>
            <person name="Barron A."/>
            <person name="Layton A."/>
            <person name="Pickard D."/>
            <person name="Kingsley R.A."/>
            <person name="Bignell A."/>
            <person name="Clark L."/>
            <person name="Harris B."/>
            <person name="Ormond D."/>
            <person name="Abdellah Z."/>
            <person name="Brooks K."/>
            <person name="Cherevach I."/>
            <person name="Chillingworth T."/>
            <person name="Woodward J."/>
            <person name="Norberczak H."/>
            <person name="Lord A."/>
            <person name="Arrowsmith C."/>
            <person name="Jagels K."/>
            <person name="Moule S."/>
            <person name="Mungall K."/>
            <person name="Saunders M."/>
            <person name="Whitehead S."/>
            <person name="Chabalgoity J.A."/>
            <person name="Maskell D."/>
            <person name="Humphreys T."/>
            <person name="Roberts M."/>
            <person name="Barrow P.A."/>
            <person name="Dougan G."/>
            <person name="Parkhill J."/>
        </authorList>
    </citation>
    <scope>NUCLEOTIDE SEQUENCE [LARGE SCALE GENOMIC DNA]</scope>
    <source>
        <strain>287/91 / NCTC 13346</strain>
    </source>
</reference>
<keyword id="KW-0997">Cell inner membrane</keyword>
<keyword id="KW-1003">Cell membrane</keyword>
<keyword id="KW-0472">Membrane</keyword>
<name>SYDP_SALG2</name>